<keyword id="KW-0010">Activator</keyword>
<keyword id="KW-0963">Cytoplasm</keyword>
<keyword id="KW-0238">DNA-binding</keyword>
<keyword id="KW-0597">Phosphoprotein</keyword>
<keyword id="KW-0804">Transcription</keyword>
<keyword id="KW-0805">Transcription regulation</keyword>
<keyword id="KW-0902">Two-component regulatory system</keyword>
<feature type="chain" id="PRO_0000081272" description="Response regulator protein VraR">
    <location>
        <begin position="1"/>
        <end position="209"/>
    </location>
</feature>
<feature type="domain" description="Response regulatory" evidence="3">
    <location>
        <begin position="4"/>
        <end position="120"/>
    </location>
</feature>
<feature type="domain" description="HTH luxR-type" evidence="4">
    <location>
        <begin position="141"/>
        <end position="206"/>
    </location>
</feature>
<feature type="DNA-binding region" description="H-T-H motif" evidence="4">
    <location>
        <begin position="165"/>
        <end position="184"/>
    </location>
</feature>
<feature type="modified residue" description="4-aspartylphosphate" evidence="3">
    <location>
        <position position="55"/>
    </location>
</feature>
<reference key="1">
    <citation type="journal article" date="2004" name="Proc. Natl. Acad. Sci. U.S.A.">
        <title>Complete genomes of two clinical Staphylococcus aureus strains: evidence for the rapid evolution of virulence and drug resistance.</title>
        <authorList>
            <person name="Holden M.T.G."/>
            <person name="Feil E.J."/>
            <person name="Lindsay J.A."/>
            <person name="Peacock S.J."/>
            <person name="Day N.P.J."/>
            <person name="Enright M.C."/>
            <person name="Foster T.J."/>
            <person name="Moore C.E."/>
            <person name="Hurst L."/>
            <person name="Atkin R."/>
            <person name="Barron A."/>
            <person name="Bason N."/>
            <person name="Bentley S.D."/>
            <person name="Chillingworth C."/>
            <person name="Chillingworth T."/>
            <person name="Churcher C."/>
            <person name="Clark L."/>
            <person name="Corton C."/>
            <person name="Cronin A."/>
            <person name="Doggett J."/>
            <person name="Dowd L."/>
            <person name="Feltwell T."/>
            <person name="Hance Z."/>
            <person name="Harris B."/>
            <person name="Hauser H."/>
            <person name="Holroyd S."/>
            <person name="Jagels K."/>
            <person name="James K.D."/>
            <person name="Lennard N."/>
            <person name="Line A."/>
            <person name="Mayes R."/>
            <person name="Moule S."/>
            <person name="Mungall K."/>
            <person name="Ormond D."/>
            <person name="Quail M.A."/>
            <person name="Rabbinowitsch E."/>
            <person name="Rutherford K.M."/>
            <person name="Sanders M."/>
            <person name="Sharp S."/>
            <person name="Simmonds M."/>
            <person name="Stevens K."/>
            <person name="Whitehead S."/>
            <person name="Barrell B.G."/>
            <person name="Spratt B.G."/>
            <person name="Parkhill J."/>
        </authorList>
    </citation>
    <scope>NUCLEOTIDE SEQUENCE [LARGE SCALE GENOMIC DNA]</scope>
    <source>
        <strain>MRSA252</strain>
    </source>
</reference>
<gene>
    <name type="primary">vraR</name>
    <name type="ordered locus">SAR1974</name>
</gene>
<dbReference type="EMBL" id="BX571856">
    <property type="protein sequence ID" value="CAG40961.1"/>
    <property type="molecule type" value="Genomic_DNA"/>
</dbReference>
<dbReference type="RefSeq" id="WP_000153535.1">
    <property type="nucleotide sequence ID" value="NC_002952.2"/>
</dbReference>
<dbReference type="SMR" id="Q6GFH3"/>
<dbReference type="KEGG" id="sar:SAR1974"/>
<dbReference type="HOGENOM" id="CLU_000445_90_10_9"/>
<dbReference type="Proteomes" id="UP000000596">
    <property type="component" value="Chromosome"/>
</dbReference>
<dbReference type="GO" id="GO:0005737">
    <property type="term" value="C:cytoplasm"/>
    <property type="evidence" value="ECO:0007669"/>
    <property type="project" value="UniProtKB-SubCell"/>
</dbReference>
<dbReference type="GO" id="GO:0003677">
    <property type="term" value="F:DNA binding"/>
    <property type="evidence" value="ECO:0007669"/>
    <property type="project" value="UniProtKB-KW"/>
</dbReference>
<dbReference type="GO" id="GO:0000160">
    <property type="term" value="P:phosphorelay signal transduction system"/>
    <property type="evidence" value="ECO:0007669"/>
    <property type="project" value="UniProtKB-KW"/>
</dbReference>
<dbReference type="GO" id="GO:0006355">
    <property type="term" value="P:regulation of DNA-templated transcription"/>
    <property type="evidence" value="ECO:0007669"/>
    <property type="project" value="InterPro"/>
</dbReference>
<dbReference type="CDD" id="cd06170">
    <property type="entry name" value="LuxR_C_like"/>
    <property type="match status" value="1"/>
</dbReference>
<dbReference type="CDD" id="cd17535">
    <property type="entry name" value="REC_NarL-like"/>
    <property type="match status" value="1"/>
</dbReference>
<dbReference type="Gene3D" id="3.40.50.2300">
    <property type="match status" value="1"/>
</dbReference>
<dbReference type="InterPro" id="IPR011006">
    <property type="entry name" value="CheY-like_superfamily"/>
</dbReference>
<dbReference type="InterPro" id="IPR016032">
    <property type="entry name" value="Sig_transdc_resp-reg_C-effctor"/>
</dbReference>
<dbReference type="InterPro" id="IPR001789">
    <property type="entry name" value="Sig_transdc_resp-reg_receiver"/>
</dbReference>
<dbReference type="InterPro" id="IPR000792">
    <property type="entry name" value="Tscrpt_reg_LuxR_C"/>
</dbReference>
<dbReference type="InterPro" id="IPR039420">
    <property type="entry name" value="WalR-like"/>
</dbReference>
<dbReference type="PANTHER" id="PTHR43214:SF37">
    <property type="entry name" value="TRANSCRIPTIONAL REGULATORY PROTEIN YDFI"/>
    <property type="match status" value="1"/>
</dbReference>
<dbReference type="PANTHER" id="PTHR43214">
    <property type="entry name" value="TWO-COMPONENT RESPONSE REGULATOR"/>
    <property type="match status" value="1"/>
</dbReference>
<dbReference type="Pfam" id="PF00196">
    <property type="entry name" value="GerE"/>
    <property type="match status" value="1"/>
</dbReference>
<dbReference type="Pfam" id="PF00072">
    <property type="entry name" value="Response_reg"/>
    <property type="match status" value="1"/>
</dbReference>
<dbReference type="PRINTS" id="PR00038">
    <property type="entry name" value="HTHLUXR"/>
</dbReference>
<dbReference type="SMART" id="SM00421">
    <property type="entry name" value="HTH_LUXR"/>
    <property type="match status" value="1"/>
</dbReference>
<dbReference type="SMART" id="SM00448">
    <property type="entry name" value="REC"/>
    <property type="match status" value="1"/>
</dbReference>
<dbReference type="SUPFAM" id="SSF46894">
    <property type="entry name" value="C-terminal effector domain of the bipartite response regulators"/>
    <property type="match status" value="1"/>
</dbReference>
<dbReference type="SUPFAM" id="SSF52172">
    <property type="entry name" value="CheY-like"/>
    <property type="match status" value="1"/>
</dbReference>
<dbReference type="PROSITE" id="PS50043">
    <property type="entry name" value="HTH_LUXR_2"/>
    <property type="match status" value="1"/>
</dbReference>
<dbReference type="PROSITE" id="PS50110">
    <property type="entry name" value="RESPONSE_REGULATORY"/>
    <property type="match status" value="1"/>
</dbReference>
<organism>
    <name type="scientific">Staphylococcus aureus (strain MRSA252)</name>
    <dbReference type="NCBI Taxonomy" id="282458"/>
    <lineage>
        <taxon>Bacteria</taxon>
        <taxon>Bacillati</taxon>
        <taxon>Bacillota</taxon>
        <taxon>Bacilli</taxon>
        <taxon>Bacillales</taxon>
        <taxon>Staphylococcaceae</taxon>
        <taxon>Staphylococcus</taxon>
    </lineage>
</organism>
<comment type="function">
    <text evidence="1 2">Member of the two-component regulatory system VraS/VraR involved in the control of the cell wall peptidoglycan biosynthesis. Upon cellular stress, the histidine kinase VraS transfers the phosphoryl group onto VraR. Upon phosphorylation, VraR dimerizes at the N-terminal domain. In turn, phosphorylation-induced dimerization expands and enhances the VraR binding to its own promoter leading to increased expression and subsequent modulation of as many as 40 genes, which ultimately constitute the S.aureus response to cell wall damage (By similarity). In addition, inhibits the host autophagic flux and delays the early stage of autophagosome formation, thereby promoting bacterial survival. Facilitates the ability of S.aureus to resist host polymorphonuclear leukocytes-mediated phagocytosis and killing thus contributing to immune evasion (By similarity).</text>
</comment>
<comment type="subunit">
    <text evidence="2">Homodimer.</text>
</comment>
<comment type="subcellular location">
    <subcellularLocation>
        <location evidence="5">Cytoplasm</location>
    </subcellularLocation>
</comment>
<comment type="PTM">
    <text evidence="2">Phosphorylated by VraS. Phosphorylation state of VraR controls dimerization of the protein.</text>
</comment>
<evidence type="ECO:0000250" key="1">
    <source>
        <dbReference type="UniProtKB" id="P0C0Z1"/>
    </source>
</evidence>
<evidence type="ECO:0000250" key="2">
    <source>
        <dbReference type="UniProtKB" id="Q7A2Q1"/>
    </source>
</evidence>
<evidence type="ECO:0000255" key="3">
    <source>
        <dbReference type="PROSITE-ProRule" id="PRU00169"/>
    </source>
</evidence>
<evidence type="ECO:0000255" key="4">
    <source>
        <dbReference type="PROSITE-ProRule" id="PRU00411"/>
    </source>
</evidence>
<evidence type="ECO:0000305" key="5"/>
<protein>
    <recommendedName>
        <fullName>Response regulator protein VraR</fullName>
    </recommendedName>
</protein>
<sequence length="209" mass="23559">MTIKVLFVDDHEMVRIGISSYLSTQSDIEVVGEGASGKEAIAKAHELKPDLILMDLLMEDMDGVEATTQIKKDLPQIKVLMLTSFIEDKEVYRALDAGVDSYILKTTSAKDIADAVRKTSRGESVFEPEVLVKMRNRMKKRAELYEMLTEREMEILLLIAKGYSNQEIASASHITIKTVKTHVSNILSKLEVQDRTQAVIYAFQHNLIQ</sequence>
<name>VRAR_STAAR</name>
<proteinExistence type="inferred from homology"/>
<accession>Q6GFH3</accession>